<gene>
    <name evidence="1" type="primary">recO</name>
    <name type="ordered locus">CYA_1394</name>
</gene>
<evidence type="ECO:0000255" key="1">
    <source>
        <dbReference type="HAMAP-Rule" id="MF_00201"/>
    </source>
</evidence>
<evidence type="ECO:0000256" key="2">
    <source>
        <dbReference type="SAM" id="MobiDB-lite"/>
    </source>
</evidence>
<organism>
    <name type="scientific">Synechococcus sp. (strain JA-3-3Ab)</name>
    <name type="common">Cyanobacteria bacterium Yellowstone A-Prime</name>
    <dbReference type="NCBI Taxonomy" id="321327"/>
    <lineage>
        <taxon>Bacteria</taxon>
        <taxon>Bacillati</taxon>
        <taxon>Cyanobacteriota</taxon>
        <taxon>Cyanophyceae</taxon>
        <taxon>Synechococcales</taxon>
        <taxon>Synechococcaceae</taxon>
        <taxon>Synechococcus</taxon>
    </lineage>
</organism>
<proteinExistence type="inferred from homology"/>
<sequence>MSGVTYRVTGINLKAMPLGEADRIITILTREQGLIRAVAKGSRKQLSKWGGRMEPFVVNDLLVARGRWSAQTDPSQCLQRIAQAETLQSFPRLGRSLAHLTAAQYLAEVALLLALPNQPQEELFVLLVEHLERIEQAPATEAVLPLLVHGLYHLLVVGGVAPSVQACYSCGEELAGEAFFSPHAGGLVCDPCRLAQRLSPVAWVSSSVLQALGSLPNPTLPSLAERALPLASWLAAERLLRRVLELHADRAIRSAGLLASCYSVPVAETLPPTPSGQGSPVAAAAFSEEDSETLGSNLKKL</sequence>
<comment type="function">
    <text evidence="1">Involved in DNA repair and RecF pathway recombination.</text>
</comment>
<comment type="similarity">
    <text evidence="1">Belongs to the RecO family.</text>
</comment>
<reference key="1">
    <citation type="journal article" date="2007" name="ISME J.">
        <title>Population level functional diversity in a microbial community revealed by comparative genomic and metagenomic analyses.</title>
        <authorList>
            <person name="Bhaya D."/>
            <person name="Grossman A.R."/>
            <person name="Steunou A.-S."/>
            <person name="Khuri N."/>
            <person name="Cohan F.M."/>
            <person name="Hamamura N."/>
            <person name="Melendrez M.C."/>
            <person name="Bateson M.M."/>
            <person name="Ward D.M."/>
            <person name="Heidelberg J.F."/>
        </authorList>
    </citation>
    <scope>NUCLEOTIDE SEQUENCE [LARGE SCALE GENOMIC DNA]</scope>
    <source>
        <strain>JA-3-3Ab</strain>
    </source>
</reference>
<dbReference type="EMBL" id="CP000239">
    <property type="protein sequence ID" value="ABC99564.1"/>
    <property type="molecule type" value="Genomic_DNA"/>
</dbReference>
<dbReference type="RefSeq" id="WP_011430242.1">
    <property type="nucleotide sequence ID" value="NC_007775.1"/>
</dbReference>
<dbReference type="SMR" id="Q2JQL5"/>
<dbReference type="STRING" id="321327.CYA_1394"/>
<dbReference type="KEGG" id="cya:CYA_1394"/>
<dbReference type="eggNOG" id="COG1381">
    <property type="taxonomic scope" value="Bacteria"/>
</dbReference>
<dbReference type="HOGENOM" id="CLU_066632_0_0_3"/>
<dbReference type="OrthoDB" id="9797083at2"/>
<dbReference type="Proteomes" id="UP000008818">
    <property type="component" value="Chromosome"/>
</dbReference>
<dbReference type="GO" id="GO:0043590">
    <property type="term" value="C:bacterial nucleoid"/>
    <property type="evidence" value="ECO:0007669"/>
    <property type="project" value="TreeGrafter"/>
</dbReference>
<dbReference type="GO" id="GO:0006310">
    <property type="term" value="P:DNA recombination"/>
    <property type="evidence" value="ECO:0007669"/>
    <property type="project" value="UniProtKB-UniRule"/>
</dbReference>
<dbReference type="GO" id="GO:0006302">
    <property type="term" value="P:double-strand break repair"/>
    <property type="evidence" value="ECO:0007669"/>
    <property type="project" value="TreeGrafter"/>
</dbReference>
<dbReference type="Gene3D" id="2.40.50.140">
    <property type="entry name" value="Nucleic acid-binding proteins"/>
    <property type="match status" value="1"/>
</dbReference>
<dbReference type="Gene3D" id="1.20.1440.120">
    <property type="entry name" value="Recombination protein O, C-terminal domain"/>
    <property type="match status" value="1"/>
</dbReference>
<dbReference type="HAMAP" id="MF_00201">
    <property type="entry name" value="RecO"/>
    <property type="match status" value="1"/>
</dbReference>
<dbReference type="InterPro" id="IPR037278">
    <property type="entry name" value="ARFGAP/RecO"/>
</dbReference>
<dbReference type="InterPro" id="IPR022572">
    <property type="entry name" value="DNA_rep/recomb_RecO_N"/>
</dbReference>
<dbReference type="InterPro" id="IPR012340">
    <property type="entry name" value="NA-bd_OB-fold"/>
</dbReference>
<dbReference type="InterPro" id="IPR003717">
    <property type="entry name" value="RecO"/>
</dbReference>
<dbReference type="InterPro" id="IPR042242">
    <property type="entry name" value="RecO_C"/>
</dbReference>
<dbReference type="NCBIfam" id="TIGR00613">
    <property type="entry name" value="reco"/>
    <property type="match status" value="1"/>
</dbReference>
<dbReference type="PANTHER" id="PTHR33991">
    <property type="entry name" value="DNA REPAIR PROTEIN RECO"/>
    <property type="match status" value="1"/>
</dbReference>
<dbReference type="PANTHER" id="PTHR33991:SF1">
    <property type="entry name" value="DNA REPAIR PROTEIN RECO"/>
    <property type="match status" value="1"/>
</dbReference>
<dbReference type="Pfam" id="PF02565">
    <property type="entry name" value="RecO_C"/>
    <property type="match status" value="1"/>
</dbReference>
<dbReference type="Pfam" id="PF11967">
    <property type="entry name" value="RecO_N"/>
    <property type="match status" value="1"/>
</dbReference>
<dbReference type="SUPFAM" id="SSF57863">
    <property type="entry name" value="ArfGap/RecO-like zinc finger"/>
    <property type="match status" value="1"/>
</dbReference>
<dbReference type="SUPFAM" id="SSF50249">
    <property type="entry name" value="Nucleic acid-binding proteins"/>
    <property type="match status" value="1"/>
</dbReference>
<protein>
    <recommendedName>
        <fullName evidence="1">DNA repair protein RecO</fullName>
    </recommendedName>
    <alternativeName>
        <fullName evidence="1">Recombination protein O</fullName>
    </alternativeName>
</protein>
<name>RECO_SYNJA</name>
<accession>Q2JQL5</accession>
<feature type="chain" id="PRO_0000264852" description="DNA repair protein RecO">
    <location>
        <begin position="1"/>
        <end position="301"/>
    </location>
</feature>
<feature type="region of interest" description="Disordered" evidence="2">
    <location>
        <begin position="272"/>
        <end position="301"/>
    </location>
</feature>
<keyword id="KW-0227">DNA damage</keyword>
<keyword id="KW-0233">DNA recombination</keyword>
<keyword id="KW-0234">DNA repair</keyword>